<evidence type="ECO:0000250" key="1"/>
<evidence type="ECO:0000255" key="2"/>
<evidence type="ECO:0000269" key="3">
    <source>
    </source>
</evidence>
<evidence type="ECO:0000269" key="4">
    <source>
    </source>
</evidence>
<evidence type="ECO:0000269" key="5">
    <source>
    </source>
</evidence>
<evidence type="ECO:0000269" key="6">
    <source>
    </source>
</evidence>
<evidence type="ECO:0000269" key="7">
    <source>
    </source>
</evidence>
<evidence type="ECO:0000269" key="8">
    <source>
    </source>
</evidence>
<evidence type="ECO:0000305" key="9"/>
<evidence type="ECO:0007829" key="10">
    <source>
        <dbReference type="PDB" id="1SFR"/>
    </source>
</evidence>
<sequence length="338" mass="35686">MQLVDRVRGAVTGMSRRLVVGAVGAALVSGLVGAVGGTATAGAFSRPGLPVEYLQVPSPSMGRDIKVQFQSGGANSPALYLLDGLRAQDDFSGWDINTPAFEWYDQSGLSVVMPVGGQSSFYSDWYQPACGKAGCQTYKWETFLTSELPGWLQANRHVKPTGSAVVGLSMAASSALTLAIYHPQQFVYAGAMSGLLDPSQAMGPTLIGLAMGDAGGYKASDMWGPKEDPAWQRNDPLLNVGKLIANNTRVWVYCGNGKPSDLGGNNLPAKFLEGFVRTSNIKFQDAYNAGGGHNGVFDFPDSGTHSWEYWGAQLNAMKPDLQRALGATPNTGPAPQGA</sequence>
<reference key="1">
    <citation type="journal article" date="1989" name="Infect. Immun.">
        <title>Cloning, sequence determination, and expression of a 32-kilodalton-protein gene of Mycobacterium tuberculosis.</title>
        <authorList>
            <person name="Borremans M."/>
            <person name="de Wit L."/>
            <person name="Volckaert G."/>
            <person name="Ooms J."/>
            <person name="de Bruyn J."/>
            <person name="Huygen K."/>
            <person name="van Vooren J.P."/>
            <person name="Stelandre M."/>
            <person name="Verhofstadt R."/>
            <person name="Content J."/>
        </authorList>
    </citation>
    <scope>NUCLEOTIDE SEQUENCE [GENOMIC DNA]</scope>
    <source>
        <strain>ATCC 35801 / TMC 107 / Erdman</strain>
    </source>
</reference>
<reference key="2">
    <citation type="journal article" date="1996" name="Infect. Immun.">
        <title>Novel insights into the genetics, biochemistry, and immunocytochemistry of the 30-kilodalton major extracellular protein of Mycobacterium tuberculosis.</title>
        <authorList>
            <person name="Harth G."/>
            <person name="Lee B.Y."/>
            <person name="Wang J."/>
            <person name="Clemens D.L."/>
            <person name="Horwitz M.A."/>
        </authorList>
    </citation>
    <scope>NUCLEOTIDE SEQUENCE [GENOMIC DNA]</scope>
    <scope>SUBUNIT</scope>
    <scope>SUBCELLULAR LOCATION</scope>
    <scope>DISULFIDE BOND</scope>
    <source>
        <strain>ATCC 35801 / TMC 107 / Erdman</strain>
    </source>
</reference>
<reference key="3">
    <citation type="journal article" date="1997" name="Infect. Immun.">
        <authorList>
            <person name="Harth G."/>
            <person name="Lee B.Y."/>
            <person name="Wang J."/>
            <person name="Clemens D.L."/>
            <person name="Horwitz M.A."/>
        </authorList>
    </citation>
    <scope>ERRATUM OF PUBMED:8757831</scope>
</reference>
<reference key="4">
    <citation type="journal article" date="2010" name="Infect. Genet. Evol.">
        <title>Single nucleotide polymorphisms in cell wall biosynthesis-associated genes and phylogeny of Mycobacterium tuberculosis lineages.</title>
        <authorList>
            <person name="Chuang P.C."/>
            <person name="Chen Y.M."/>
            <person name="Chen H.Y."/>
            <person name="Jou R."/>
        </authorList>
    </citation>
    <scope>NUCLEOTIDE SEQUENCE [GENOMIC DNA]</scope>
    <source>
        <strain>C01</strain>
    </source>
</reference>
<reference key="5">
    <citation type="journal article" date="1998" name="Nature">
        <title>Deciphering the biology of Mycobacterium tuberculosis from the complete genome sequence.</title>
        <authorList>
            <person name="Cole S.T."/>
            <person name="Brosch R."/>
            <person name="Parkhill J."/>
            <person name="Garnier T."/>
            <person name="Churcher C.M."/>
            <person name="Harris D.E."/>
            <person name="Gordon S.V."/>
            <person name="Eiglmeier K."/>
            <person name="Gas S."/>
            <person name="Barry C.E. III"/>
            <person name="Tekaia F."/>
            <person name="Badcock K."/>
            <person name="Basham D."/>
            <person name="Brown D."/>
            <person name="Chillingworth T."/>
            <person name="Connor R."/>
            <person name="Davies R.M."/>
            <person name="Devlin K."/>
            <person name="Feltwell T."/>
            <person name="Gentles S."/>
            <person name="Hamlin N."/>
            <person name="Holroyd S."/>
            <person name="Hornsby T."/>
            <person name="Jagels K."/>
            <person name="Krogh A."/>
            <person name="McLean J."/>
            <person name="Moule S."/>
            <person name="Murphy L.D."/>
            <person name="Oliver S."/>
            <person name="Osborne J."/>
            <person name="Quail M.A."/>
            <person name="Rajandream M.A."/>
            <person name="Rogers J."/>
            <person name="Rutter S."/>
            <person name="Seeger K."/>
            <person name="Skelton S."/>
            <person name="Squares S."/>
            <person name="Squares R."/>
            <person name="Sulston J.E."/>
            <person name="Taylor K."/>
            <person name="Whitehead S."/>
            <person name="Barrell B.G."/>
        </authorList>
    </citation>
    <scope>NUCLEOTIDE SEQUENCE [LARGE SCALE GENOMIC DNA]</scope>
    <source>
        <strain>ATCC 25618 / H37Rv</strain>
    </source>
</reference>
<reference key="6">
    <citation type="journal article" date="1988" name="Infect. Immun.">
        <title>Characterization of fibronectin-binding antigens released by Mycobacterium tuberculosis and Mycobacterium bovis BCG.</title>
        <authorList>
            <person name="Abou-Zeid C."/>
            <person name="Ratliff T.L."/>
            <person name="Wiker H.G."/>
            <person name="Harboe M."/>
            <person name="Bennedsen J."/>
            <person name="Rook G.A."/>
        </authorList>
    </citation>
    <scope>FUNCTION IN THE FIBRONECTIN BINDING</scope>
</reference>
<reference key="7">
    <citation type="journal article" date="1990" name="Infect. Immun.">
        <title>Evidence for three separate genes encoding the proteins of the mycobacterial antigen 85 complex.</title>
        <authorList>
            <person name="Wiker H.G."/>
            <person name="Sletten K."/>
            <person name="Nagai S."/>
            <person name="Harboe M."/>
        </authorList>
    </citation>
    <scope>PROTEIN SEQUENCE OF 44-53</scope>
</reference>
<reference key="8">
    <citation type="journal article" date="2002" name="Mol. Microbiol.">
        <title>Evidence for a partial redundancy of the fibronectin-binding proteins for the transfer of mycoloyl residues onto the cell wall arabinogalactan termini of Mycobacterium tuberculosis.</title>
        <authorList>
            <person name="Puech V."/>
            <person name="Guilhot C."/>
            <person name="Perez E."/>
            <person name="Tropis M."/>
            <person name="Armitige L.Y."/>
            <person name="Gicquel B."/>
            <person name="Daffe M."/>
        </authorList>
    </citation>
    <scope>FUNCTION AS A MYCOLYLTRANSFERASE</scope>
    <scope>DISRUPTION PHENOTYPE</scope>
</reference>
<reference key="9">
    <citation type="journal article" date="1997" name="Science">
        <title>Role of the major antigen of Mycobacterium tuberculosis in cell wall biogenesis.</title>
        <authorList>
            <person name="Belisle J.T."/>
            <person name="Vissa V.D."/>
            <person name="Sievert T."/>
            <person name="Takayama K."/>
            <person name="Brennan P.J."/>
            <person name="Besra G.S."/>
        </authorList>
    </citation>
    <scope>FUNCTION AS A MYCOLYLTRANSFERASE</scope>
    <scope>NOMENCLATURE</scope>
</reference>
<reference key="10">
    <citation type="journal article" date="2008" name="BMC Syst. Biol.">
        <title>targetTB: a target identification pipeline for Mycobacterium tuberculosis through an interactome, reactome and genome-scale structural analysis.</title>
        <authorList>
            <person name="Raman K."/>
            <person name="Yeturu K."/>
            <person name="Chandra N."/>
        </authorList>
    </citation>
    <scope>IDENTIFICATION AS A DRUG TARGET [LARGE SCALE ANALYSIS]</scope>
</reference>
<reference key="11">
    <citation type="journal article" date="2011" name="Mol. Cell. Proteomics">
        <title>Proteogenomic analysis of Mycobacterium tuberculosis by high resolution mass spectrometry.</title>
        <authorList>
            <person name="Kelkar D.S."/>
            <person name="Kumar D."/>
            <person name="Kumar P."/>
            <person name="Balakrishnan L."/>
            <person name="Muthusamy B."/>
            <person name="Yadav A.K."/>
            <person name="Shrivastava P."/>
            <person name="Marimuthu A."/>
            <person name="Anand S."/>
            <person name="Sundaram H."/>
            <person name="Kingsbury R."/>
            <person name="Harsha H.C."/>
            <person name="Nair B."/>
            <person name="Prasad T.S."/>
            <person name="Chauhan D.S."/>
            <person name="Katoch K."/>
            <person name="Katoch V.M."/>
            <person name="Kumar P."/>
            <person name="Chaerkady R."/>
            <person name="Ramachandran S."/>
            <person name="Dash D."/>
            <person name="Pandey A."/>
        </authorList>
    </citation>
    <scope>IDENTIFICATION BY MASS SPECTROMETRY [LARGE SCALE ANALYSIS]</scope>
    <source>
        <strain>ATCC 25618 / H37Rv</strain>
    </source>
</reference>
<reference key="12">
    <citation type="journal article" date="2011" name="Mol. Microbiol.">
        <title>The Mycobacterium tuberculosis Ag85A is a novel diacylglycerol acyltransferase involved in lipid body formation.</title>
        <authorList>
            <person name="Elamin A.A."/>
            <person name="Stehr M."/>
            <person name="Spallek R."/>
            <person name="Rohde M."/>
            <person name="Singh M."/>
        </authorList>
    </citation>
    <scope>FUNCTION AS A DIACYLGLYCEROL ACYLTRANSFERASE</scope>
    <scope>CATALYTIC ACTIVITY</scope>
    <scope>MUTAGENESIS OF SER-169</scope>
    <scope>BIOPHYSICOCHEMICAL PROPERTIES</scope>
    <scope>SUBCELLULAR LOCATION</scope>
    <scope>SUBSTRATE SPECIFICITY</scope>
</reference>
<reference key="13">
    <citation type="journal article" date="2004" name="J. Biol. Chem.">
        <title>Mycobacterium tuberculosis antigen 85A and 85C structures confirm binding orientation and conserved substrate specificity.</title>
        <authorList>
            <person name="Ronning D.R."/>
            <person name="Vissa V."/>
            <person name="Besra G.S."/>
            <person name="Belisle J.T."/>
            <person name="Sacchettini J.C."/>
        </authorList>
    </citation>
    <scope>X-RAY CRYSTALLOGRAPHY (2.7 ANGSTROMS) OF 43-338</scope>
    <scope>DISULFIDE BOND</scope>
    <scope>SUBUNIT</scope>
</reference>
<accession>P9WQP3</accession>
<accession>D6MJP3</accession>
<accession>F2GDG3</accession>
<accession>P0A4V2</accession>
<accession>P17944</accession>
<accession>P17996</accession>
<comment type="function">
    <text evidence="3 5 6 8">The antigen 85 proteins (FbpA, FbpB, FbpC) are responsible for the high affinity of mycobacteria for fibronectin, a large adhesive glycoprotein, which facilitates the attachment of M.tuberculosis to murine alveolar macrophages (AMs). They also help to maintain the integrity of the cell wall by catalyzing the transfer of mycolic acids to cell wall arabinogalactan, and through the synthesis of alpha,alpha-trehalose dimycolate (TDM, cord factor). They catalyze the transfer of a mycoloyl residue from one molecule of alpha,alpha-trehalose monomycolate (TMM) to another TMM, leading to the formation of TDM. FbpA mediates triacylglycerol (TAG) formation with long-chain acyl-CoA as the acyl donor and 1,2-dipalmitoyl-sn-glycerol (1,2-dipalmitin) as the acyl acceptor. It has a preference for C26:0-CoA over C18:1-CoA.</text>
</comment>
<comment type="catalytic activity">
    <reaction evidence="5">
        <text>an acyl-CoA + a 1,2-diacyl-sn-glycerol = a triacyl-sn-glycerol + CoA</text>
        <dbReference type="Rhea" id="RHEA:10868"/>
        <dbReference type="ChEBI" id="CHEBI:17815"/>
        <dbReference type="ChEBI" id="CHEBI:57287"/>
        <dbReference type="ChEBI" id="CHEBI:58342"/>
        <dbReference type="ChEBI" id="CHEBI:64615"/>
        <dbReference type="EC" id="2.3.1.20"/>
    </reaction>
</comment>
<comment type="catalytic activity">
    <reaction evidence="5">
        <text>2 alpha,alpha'-trehalose 6-mycolate = alpha,alpha'-trehalose 6,6'-bismycolate + alpha,alpha-trehalose</text>
        <dbReference type="Rhea" id="RHEA:23472"/>
        <dbReference type="ChEBI" id="CHEBI:16551"/>
        <dbReference type="ChEBI" id="CHEBI:18195"/>
        <dbReference type="ChEBI" id="CHEBI:18234"/>
        <dbReference type="EC" id="2.3.1.122"/>
    </reaction>
</comment>
<comment type="biophysicochemical properties">
    <kinetics>
        <KM evidence="5">306 uM for C26:0-CoA (with 1,2-dipalmitin as the acyl acceptor and at 37 degrees Celsius)</KM>
        <KM evidence="5">390 uM for palmitoleoyl-CoA (with 1,2-dipalmitin as the acyl acceptor and at 37 degrees Celsius)</KM>
        <KM evidence="5">540 uM for C18:0-CoA (with 1,2-dipalmitin as the acyl acceptor and at 37 degrees Celsius)</KM>
        <Vmax evidence="5">3166.0 nmol/min/mg enzyme (at 37 degrees Celsius)</Vmax>
        <text>kcat is 55.54 min(-1).</text>
    </kinetics>
</comment>
<comment type="subunit">
    <text evidence="4 7">Homodimer.</text>
</comment>
<comment type="interaction">
    <interactant intactId="EBI-26878164">
        <id>PRO_0000000214</id>
    </interactant>
    <interactant intactId="EBI-11784425">
        <id>PRO_0000009136</id>
        <label>FCN1</label>
        <dbReference type="UniProtKB" id="O00602"/>
    </interactant>
    <organismsDiffer>true</organismsDiffer>
    <experiments>2</experiments>
</comment>
<comment type="interaction">
    <interactant intactId="EBI-26878164">
        <id>PRO_0000000214</id>
    </interactant>
    <interactant intactId="EBI-7468784">
        <id>Q15485</id>
        <label>FCN2</label>
    </interactant>
    <organismsDiffer>true</organismsDiffer>
    <experiments>2</experiments>
</comment>
<comment type="interaction">
    <interactant intactId="EBI-26878164">
        <id>PRO_0000000214</id>
    </interactant>
    <interactant intactId="EBI-11786958">
        <id>O75636</id>
        <label>FCN3</label>
    </interactant>
    <organismsDiffer>true</organismsDiffer>
    <experiments>2</experiments>
</comment>
<comment type="interaction">
    <interactant intactId="EBI-26878164">
        <id>PRO_0000000214</id>
    </interactant>
    <interactant intactId="EBI-25427940">
        <id>PRO_0000017401</id>
        <label>MBL2</label>
        <dbReference type="UniProtKB" id="P11226"/>
    </interactant>
    <organismsDiffer>true</organismsDiffer>
    <experiments>2</experiments>
</comment>
<comment type="subcellular location">
    <subcellularLocation>
        <location>Secreted</location>
        <location>Cell wall</location>
    </subcellularLocation>
    <subcellularLocation>
        <location>Cytoplasm</location>
    </subcellularLocation>
</comment>
<comment type="disruption phenotype">
    <text evidence="3">Cells lacking this gene produce normally mycoloylated cell wall components.</text>
</comment>
<comment type="miscellaneous">
    <text>Was identified as a high-confidence drug target.</text>
</comment>
<comment type="similarity">
    <text evidence="9">Belongs to the mycobacterial A85 antigen family.</text>
</comment>
<dbReference type="EC" id="2.3.1.122"/>
<dbReference type="EC" id="2.3.1.20"/>
<dbReference type="EMBL" id="M27016">
    <property type="protein sequence ID" value="AAA50288.1"/>
    <property type="molecule type" value="Genomic_DNA"/>
</dbReference>
<dbReference type="EMBL" id="U47335">
    <property type="protein sequence ID" value="AAC44295.1"/>
    <property type="molecule type" value="Genomic_DNA"/>
</dbReference>
<dbReference type="EMBL" id="GQ150314">
    <property type="protein sequence ID" value="ADD50052.1"/>
    <property type="molecule type" value="Genomic_DNA"/>
</dbReference>
<dbReference type="EMBL" id="AL123456">
    <property type="protein sequence ID" value="CCP46633.1"/>
    <property type="molecule type" value="Genomic_DNA"/>
</dbReference>
<dbReference type="PIR" id="H70887">
    <property type="entry name" value="H70887"/>
</dbReference>
<dbReference type="RefSeq" id="NP_218321.1">
    <property type="nucleotide sequence ID" value="NC_000962.3"/>
</dbReference>
<dbReference type="RefSeq" id="WP_003900759.1">
    <property type="nucleotide sequence ID" value="NZ_NVQJ01000022.1"/>
</dbReference>
<dbReference type="PDB" id="1SFR">
    <property type="method" value="X-ray"/>
    <property type="resolution" value="2.70 A"/>
    <property type="chains" value="A/B/C=43-338"/>
</dbReference>
<dbReference type="PDBsum" id="1SFR"/>
<dbReference type="SMR" id="P9WQP3"/>
<dbReference type="FunCoup" id="P9WQP3">
    <property type="interactions" value="13"/>
</dbReference>
<dbReference type="IntAct" id="P9WQP3">
    <property type="interactions" value="6"/>
</dbReference>
<dbReference type="STRING" id="83332.Rv3804c"/>
<dbReference type="ESTHER" id="myctu-a85a">
    <property type="family name" value="A85-Mycolyl-transferase"/>
</dbReference>
<dbReference type="MoonProt" id="P9WQP3"/>
<dbReference type="PaxDb" id="83332-Rv3804c"/>
<dbReference type="DNASU" id="886132"/>
<dbReference type="GeneID" id="45427805"/>
<dbReference type="GeneID" id="886132"/>
<dbReference type="KEGG" id="mtu:Rv3804c"/>
<dbReference type="KEGG" id="mtv:RVBD_3804c"/>
<dbReference type="TubercuList" id="Rv3804c"/>
<dbReference type="eggNOG" id="COG0627">
    <property type="taxonomic scope" value="Bacteria"/>
</dbReference>
<dbReference type="InParanoid" id="P9WQP3"/>
<dbReference type="OrthoDB" id="4366784at2"/>
<dbReference type="PhylomeDB" id="P9WQP3"/>
<dbReference type="BioCyc" id="MetaCyc:G185E-8100-MONOMER"/>
<dbReference type="BRENDA" id="2.3.1.122">
    <property type="organism ID" value="3445"/>
</dbReference>
<dbReference type="BRENDA" id="2.3.1.20">
    <property type="organism ID" value="3445"/>
</dbReference>
<dbReference type="EvolutionaryTrace" id="P9WQP3"/>
<dbReference type="Proteomes" id="UP000001584">
    <property type="component" value="Chromosome"/>
</dbReference>
<dbReference type="GO" id="GO:0005737">
    <property type="term" value="C:cytoplasm"/>
    <property type="evidence" value="ECO:0007669"/>
    <property type="project" value="UniProtKB-SubCell"/>
</dbReference>
<dbReference type="GO" id="GO:0005576">
    <property type="term" value="C:extracellular region"/>
    <property type="evidence" value="ECO:0000314"/>
    <property type="project" value="CAFA"/>
</dbReference>
<dbReference type="GO" id="GO:0009274">
    <property type="term" value="C:peptidoglycan-based cell wall"/>
    <property type="evidence" value="ECO:0000314"/>
    <property type="project" value="MTBBASE"/>
</dbReference>
<dbReference type="GO" id="GO:0005886">
    <property type="term" value="C:plasma membrane"/>
    <property type="evidence" value="ECO:0007005"/>
    <property type="project" value="MTBBASE"/>
</dbReference>
<dbReference type="GO" id="GO:0016747">
    <property type="term" value="F:acyltransferase activity, transferring groups other than amino-acyl groups"/>
    <property type="evidence" value="ECO:0000314"/>
    <property type="project" value="MTBBASE"/>
</dbReference>
<dbReference type="GO" id="GO:0004144">
    <property type="term" value="F:diacylglycerol O-acyltransferase activity"/>
    <property type="evidence" value="ECO:0007669"/>
    <property type="project" value="UniProtKB-EC"/>
</dbReference>
<dbReference type="GO" id="GO:0050348">
    <property type="term" value="F:trehalose O-mycolyltransferase activity"/>
    <property type="evidence" value="ECO:0007669"/>
    <property type="project" value="UniProtKB-EC"/>
</dbReference>
<dbReference type="GO" id="GO:0035375">
    <property type="term" value="F:zymogen binding"/>
    <property type="evidence" value="ECO:0000353"/>
    <property type="project" value="CAFA"/>
</dbReference>
<dbReference type="FunFam" id="3.40.50.1820:FF:000086">
    <property type="entry name" value="Diacylglycerol acyltransferase/mycolyltransferase Ag85C"/>
    <property type="match status" value="1"/>
</dbReference>
<dbReference type="Gene3D" id="3.40.50.1820">
    <property type="entry name" value="alpha/beta hydrolase"/>
    <property type="match status" value="1"/>
</dbReference>
<dbReference type="InterPro" id="IPR029058">
    <property type="entry name" value="AB_hydrolase_fold"/>
</dbReference>
<dbReference type="InterPro" id="IPR000801">
    <property type="entry name" value="Esterase-like"/>
</dbReference>
<dbReference type="InterPro" id="IPR050583">
    <property type="entry name" value="Mycobacterial_A85_antigen"/>
</dbReference>
<dbReference type="InterPro" id="IPR006311">
    <property type="entry name" value="TAT_signal"/>
</dbReference>
<dbReference type="PANTHER" id="PTHR48098:SF1">
    <property type="entry name" value="DIACYLGLYCEROL ACYLTRANSFERASE_MYCOLYLTRANSFERASE AG85A"/>
    <property type="match status" value="1"/>
</dbReference>
<dbReference type="PANTHER" id="PTHR48098">
    <property type="entry name" value="ENTEROCHELIN ESTERASE-RELATED"/>
    <property type="match status" value="1"/>
</dbReference>
<dbReference type="Pfam" id="PF00756">
    <property type="entry name" value="Esterase"/>
    <property type="match status" value="1"/>
</dbReference>
<dbReference type="SUPFAM" id="SSF53474">
    <property type="entry name" value="alpha/beta-Hydrolases"/>
    <property type="match status" value="1"/>
</dbReference>
<feature type="signal peptide" description="Tat-type signal" evidence="2">
    <location>
        <begin position="1"/>
        <end position="43"/>
    </location>
</feature>
<feature type="chain" id="PRO_0000000214" description="Diacylglycerol acyltransferase/mycolyltransferase Ag85A">
    <location>
        <begin position="44"/>
        <end position="338"/>
    </location>
</feature>
<feature type="region of interest" description="Fibronectin-binding">
    <location>
        <begin position="101"/>
        <end position="111"/>
    </location>
</feature>
<feature type="active site" description="Nucleophile" evidence="9">
    <location>
        <position position="169"/>
    </location>
</feature>
<feature type="active site" evidence="1">
    <location>
        <position position="273"/>
    </location>
</feature>
<feature type="active site" evidence="1">
    <location>
        <position position="305"/>
    </location>
</feature>
<feature type="binding site" evidence="1">
    <location>
        <begin position="85"/>
        <end position="86"/>
    </location>
    <ligand>
        <name>substrate</name>
    </ligand>
</feature>
<feature type="binding site" evidence="1">
    <location>
        <position position="169"/>
    </location>
    <ligand>
        <name>substrate</name>
    </ligand>
</feature>
<feature type="binding site" evidence="1">
    <location>
        <position position="197"/>
    </location>
    <ligand>
        <name>substrate</name>
    </ligand>
</feature>
<feature type="binding site" evidence="1">
    <location>
        <begin position="275"/>
        <end position="278"/>
    </location>
    <ligand>
        <name>substrate</name>
    </ligand>
</feature>
<feature type="binding site" evidence="1">
    <location>
        <position position="282"/>
    </location>
    <ligand>
        <name>substrate</name>
    </ligand>
</feature>
<feature type="binding site" evidence="1">
    <location>
        <begin position="305"/>
        <end position="307"/>
    </location>
    <ligand>
        <name>substrate</name>
    </ligand>
</feature>
<feature type="disulfide bond" evidence="4 7">
    <location>
        <begin position="130"/>
        <end position="135"/>
    </location>
</feature>
<feature type="mutagenesis site" description="Abolishes diacylglycerol acyltransferase activity." evidence="5">
    <original>S</original>
    <variation>A</variation>
    <location>
        <position position="169"/>
    </location>
</feature>
<feature type="strand" evidence="10">
    <location>
        <begin position="44"/>
        <end position="46"/>
    </location>
</feature>
<feature type="strand" evidence="10">
    <location>
        <begin position="52"/>
        <end position="58"/>
    </location>
</feature>
<feature type="turn" evidence="10">
    <location>
        <begin position="59"/>
        <end position="62"/>
    </location>
</feature>
<feature type="strand" evidence="10">
    <location>
        <begin position="63"/>
        <end position="70"/>
    </location>
</feature>
<feature type="strand" evidence="10">
    <location>
        <begin position="78"/>
        <end position="82"/>
    </location>
</feature>
<feature type="strand" evidence="10">
    <location>
        <begin position="89"/>
        <end position="91"/>
    </location>
</feature>
<feature type="helix" evidence="10">
    <location>
        <begin position="93"/>
        <end position="97"/>
    </location>
</feature>
<feature type="helix" evidence="10">
    <location>
        <begin position="100"/>
        <end position="104"/>
    </location>
</feature>
<feature type="strand" evidence="10">
    <location>
        <begin position="110"/>
        <end position="114"/>
    </location>
</feature>
<feature type="strand" evidence="10">
    <location>
        <begin position="129"/>
        <end position="131"/>
    </location>
</feature>
<feature type="strand" evidence="10">
    <location>
        <begin position="134"/>
        <end position="136"/>
    </location>
</feature>
<feature type="helix" evidence="10">
    <location>
        <begin position="140"/>
        <end position="145"/>
    </location>
</feature>
<feature type="helix" evidence="10">
    <location>
        <begin position="147"/>
        <end position="156"/>
    </location>
</feature>
<feature type="strand" evidence="10">
    <location>
        <begin position="160"/>
        <end position="168"/>
    </location>
</feature>
<feature type="helix" evidence="10">
    <location>
        <begin position="170"/>
        <end position="181"/>
    </location>
</feature>
<feature type="turn" evidence="10">
    <location>
        <begin position="183"/>
        <end position="185"/>
    </location>
</feature>
<feature type="strand" evidence="10">
    <location>
        <begin position="186"/>
        <end position="193"/>
    </location>
</feature>
<feature type="helix" evidence="10">
    <location>
        <begin position="203"/>
        <end position="213"/>
    </location>
</feature>
<feature type="helix" evidence="10">
    <location>
        <begin position="219"/>
        <end position="223"/>
    </location>
</feature>
<feature type="helix" evidence="10">
    <location>
        <begin position="230"/>
        <end position="233"/>
    </location>
</feature>
<feature type="turn" evidence="10">
    <location>
        <begin position="236"/>
        <end position="239"/>
    </location>
</feature>
<feature type="helix" evidence="10">
    <location>
        <begin position="240"/>
        <end position="246"/>
    </location>
</feature>
<feature type="strand" evidence="10">
    <location>
        <begin position="249"/>
        <end position="253"/>
    </location>
</feature>
<feature type="helix" evidence="10">
    <location>
        <begin position="267"/>
        <end position="289"/>
    </location>
</feature>
<feature type="strand" evidence="10">
    <location>
        <begin position="294"/>
        <end position="298"/>
    </location>
</feature>
<feature type="helix" evidence="10">
    <location>
        <begin position="307"/>
        <end position="316"/>
    </location>
</feature>
<feature type="helix" evidence="10">
    <location>
        <begin position="318"/>
        <end position="325"/>
    </location>
</feature>
<protein>
    <recommendedName>
        <fullName>Diacylglycerol acyltransferase/mycolyltransferase Ag85A</fullName>
        <shortName>DGAT</shortName>
        <ecNumber>2.3.1.122</ecNumber>
        <ecNumber>2.3.1.20</ecNumber>
    </recommendedName>
    <alternativeName>
        <fullName>Acyl-CoA:diacylglycerol acyltransferase</fullName>
    </alternativeName>
    <alternativeName>
        <fullName>Antigen 85 complex A</fullName>
        <shortName>85A</shortName>
        <shortName>Ag85A</shortName>
    </alternativeName>
    <alternativeName>
        <fullName>Fibronectin-binding protein A</fullName>
        <shortName>Fbps A</shortName>
    </alternativeName>
</protein>
<name>A85A_MYCTU</name>
<organism>
    <name type="scientific">Mycobacterium tuberculosis (strain ATCC 25618 / H37Rv)</name>
    <dbReference type="NCBI Taxonomy" id="83332"/>
    <lineage>
        <taxon>Bacteria</taxon>
        <taxon>Bacillati</taxon>
        <taxon>Actinomycetota</taxon>
        <taxon>Actinomycetes</taxon>
        <taxon>Mycobacteriales</taxon>
        <taxon>Mycobacteriaceae</taxon>
        <taxon>Mycobacterium</taxon>
        <taxon>Mycobacterium tuberculosis complex</taxon>
    </lineage>
</organism>
<gene>
    <name type="primary">fbpA</name>
    <name type="synonym">mpt44</name>
    <name type="ordered locus">Rv3804c</name>
    <name type="ORF">MTV026.09c</name>
</gene>
<proteinExistence type="evidence at protein level"/>
<keyword id="KW-0002">3D-structure</keyword>
<keyword id="KW-0012">Acyltransferase</keyword>
<keyword id="KW-0134">Cell wall</keyword>
<keyword id="KW-0963">Cytoplasm</keyword>
<keyword id="KW-0903">Direct protein sequencing</keyword>
<keyword id="KW-1015">Disulfide bond</keyword>
<keyword id="KW-1185">Reference proteome</keyword>
<keyword id="KW-0964">Secreted</keyword>
<keyword id="KW-0732">Signal</keyword>
<keyword id="KW-0808">Transferase</keyword>